<accession>C0JAW7</accession>
<feature type="chain" id="PRO_0000392768" description="Dermonecrotic toxin LdSicTox-alphaIB1aii">
    <location>
        <begin position="1" status="less than"/>
        <end position="273"/>
    </location>
</feature>
<feature type="active site" evidence="5">
    <location>
        <position position="5"/>
    </location>
</feature>
<feature type="active site" description="Nucleophile" evidence="5">
    <location>
        <position position="41"/>
    </location>
</feature>
<feature type="binding site" evidence="5">
    <location>
        <position position="25"/>
    </location>
    <ligand>
        <name>Mg(2+)</name>
        <dbReference type="ChEBI" id="CHEBI:18420"/>
    </ligand>
</feature>
<feature type="binding site" evidence="5">
    <location>
        <position position="27"/>
    </location>
    <ligand>
        <name>Mg(2+)</name>
        <dbReference type="ChEBI" id="CHEBI:18420"/>
    </ligand>
</feature>
<feature type="binding site" evidence="5">
    <location>
        <position position="85"/>
    </location>
    <ligand>
        <name>Mg(2+)</name>
        <dbReference type="ChEBI" id="CHEBI:18420"/>
    </ligand>
</feature>
<feature type="glycosylation site" description="N-linked (GlcNAc...) asparagine" evidence="6">
    <location>
        <position position="250"/>
    </location>
</feature>
<feature type="disulfide bond" evidence="3">
    <location>
        <begin position="45"/>
        <end position="51"/>
    </location>
</feature>
<feature type="disulfide bond" evidence="3">
    <location>
        <begin position="47"/>
        <end position="190"/>
    </location>
</feature>
<feature type="non-terminal residue">
    <location>
        <position position="1"/>
    </location>
</feature>
<reference key="1">
    <citation type="journal article" date="2009" name="Mol. Biol. Evol.">
        <title>Molecular evolution, functional variation, and proposed nomenclature of the gene family that includes sphingomyelinase D in sicariid spider venoms.</title>
        <authorList>
            <person name="Binford G.J."/>
            <person name="Bodner M.R."/>
            <person name="Cordes M.H."/>
            <person name="Baldwin K.L."/>
            <person name="Rynerson M.R."/>
            <person name="Burns S.N."/>
            <person name="Zobel-Thropp P.A."/>
        </authorList>
    </citation>
    <scope>NUCLEOTIDE SEQUENCE [MRNA]</scope>
    <scope>NOMENCLATURE</scope>
    <source>
        <tissue>Venom gland</tissue>
    </source>
</reference>
<keyword id="KW-0204">Cytolysis</keyword>
<keyword id="KW-1061">Dermonecrotic toxin</keyword>
<keyword id="KW-1015">Disulfide bond</keyword>
<keyword id="KW-0325">Glycoprotein</keyword>
<keyword id="KW-0354">Hemolysis</keyword>
<keyword id="KW-0442">Lipid degradation</keyword>
<keyword id="KW-0443">Lipid metabolism</keyword>
<keyword id="KW-0456">Lyase</keyword>
<keyword id="KW-0460">Magnesium</keyword>
<keyword id="KW-0479">Metal-binding</keyword>
<keyword id="KW-0964">Secreted</keyword>
<keyword id="KW-0800">Toxin</keyword>
<sequence>WIMGHMVNAIAQIDEFVNLGANSIETDVSFDDSANPEYTYHGVPCDCGRTCTKWEYFNEFLKGLRKATTPGDSKYHEKLVLVVFDLKTSSLYDNQASDAGKKLAKSLLQNYWNNGNNGGRAYIVLSIPNLAHYKLITGFKETLTSEGHPELMDKVGYDFSGNDEIGDVAKTYKKAGVTGHVWQSDGITNCLLRGLDRVRKAVANRDSSNGYINKVYYWTVDKRATTRDALDAGVDGIMTNYPDVIADVLNESAYKAKFRIASYDDNPWETFKN</sequence>
<proteinExistence type="evidence at transcript level"/>
<name>A1KA2_LOXDE</name>
<dbReference type="EC" id="4.6.1.-" evidence="4"/>
<dbReference type="EMBL" id="FJ171402">
    <property type="protein sequence ID" value="ACN48898.1"/>
    <property type="molecule type" value="mRNA"/>
</dbReference>
<dbReference type="SMR" id="C0JAW7"/>
<dbReference type="GO" id="GO:0005576">
    <property type="term" value="C:extracellular region"/>
    <property type="evidence" value="ECO:0007669"/>
    <property type="project" value="UniProtKB-SubCell"/>
</dbReference>
<dbReference type="GO" id="GO:0016829">
    <property type="term" value="F:lyase activity"/>
    <property type="evidence" value="ECO:0007669"/>
    <property type="project" value="UniProtKB-KW"/>
</dbReference>
<dbReference type="GO" id="GO:0046872">
    <property type="term" value="F:metal ion binding"/>
    <property type="evidence" value="ECO:0007669"/>
    <property type="project" value="UniProtKB-KW"/>
</dbReference>
<dbReference type="GO" id="GO:0008081">
    <property type="term" value="F:phosphoric diester hydrolase activity"/>
    <property type="evidence" value="ECO:0007669"/>
    <property type="project" value="InterPro"/>
</dbReference>
<dbReference type="GO" id="GO:0090729">
    <property type="term" value="F:toxin activity"/>
    <property type="evidence" value="ECO:0007669"/>
    <property type="project" value="UniProtKB-KW"/>
</dbReference>
<dbReference type="GO" id="GO:0031640">
    <property type="term" value="P:killing of cells of another organism"/>
    <property type="evidence" value="ECO:0007669"/>
    <property type="project" value="UniProtKB-KW"/>
</dbReference>
<dbReference type="GO" id="GO:0016042">
    <property type="term" value="P:lipid catabolic process"/>
    <property type="evidence" value="ECO:0007669"/>
    <property type="project" value="UniProtKB-KW"/>
</dbReference>
<dbReference type="CDD" id="cd08576">
    <property type="entry name" value="GDPD_like_SMaseD_PLD"/>
    <property type="match status" value="1"/>
</dbReference>
<dbReference type="Gene3D" id="3.20.20.190">
    <property type="entry name" value="Phosphatidylinositol (PI) phosphodiesterase"/>
    <property type="match status" value="1"/>
</dbReference>
<dbReference type="InterPro" id="IPR017946">
    <property type="entry name" value="PLC-like_Pdiesterase_TIM-brl"/>
</dbReference>
<dbReference type="Pfam" id="PF13653">
    <property type="entry name" value="GDPD_2"/>
    <property type="match status" value="1"/>
</dbReference>
<dbReference type="SUPFAM" id="SSF51695">
    <property type="entry name" value="PLC-like phosphodiesterases"/>
    <property type="match status" value="1"/>
</dbReference>
<comment type="function">
    <text evidence="1 3">Dermonecrotic toxins cleave the phosphodiester linkage between the phosphate and headgroup of certain phospholipids (sphingolipid and lysolipid substrates), forming an alcohol (often choline) and a cyclic phosphate (By similarity). This toxin acts on sphingomyelin (SM) (By similarity). It may also act on ceramide phosphoethanolamine (CPE), lysophosphatidylcholine (LPC) and lysophosphatidylethanolamine (LPE), but not on lysophosphatidylserine (LPS), and lysophosphatidylglycerol (LPG) (By similarity). It acts by transphosphatidylation, releasing exclusively cyclic phosphate products as second products (By similarity). Induces dermonecrosis, hemolysis, increased vascular permeability, edema, inflammatory response, and platelet aggregation (By similarity).</text>
</comment>
<comment type="catalytic activity">
    <reaction evidence="1">
        <text>an N-(acyl)-sphingosylphosphocholine = an N-(acyl)-sphingosyl-1,3-cyclic phosphate + choline</text>
        <dbReference type="Rhea" id="RHEA:60652"/>
        <dbReference type="ChEBI" id="CHEBI:15354"/>
        <dbReference type="ChEBI" id="CHEBI:64583"/>
        <dbReference type="ChEBI" id="CHEBI:143892"/>
    </reaction>
</comment>
<comment type="catalytic activity">
    <reaction evidence="1">
        <text>an N-(acyl)-sphingosylphosphoethanolamine = an N-(acyl)-sphingosyl-1,3-cyclic phosphate + ethanolamine</text>
        <dbReference type="Rhea" id="RHEA:60648"/>
        <dbReference type="ChEBI" id="CHEBI:57603"/>
        <dbReference type="ChEBI" id="CHEBI:143891"/>
        <dbReference type="ChEBI" id="CHEBI:143892"/>
    </reaction>
</comment>
<comment type="catalytic activity">
    <reaction evidence="1">
        <text>a 1-acyl-sn-glycero-3-phosphocholine = a 1-acyl-sn-glycero-2,3-cyclic phosphate + choline</text>
        <dbReference type="Rhea" id="RHEA:60700"/>
        <dbReference type="ChEBI" id="CHEBI:15354"/>
        <dbReference type="ChEBI" id="CHEBI:58168"/>
        <dbReference type="ChEBI" id="CHEBI:143947"/>
    </reaction>
</comment>
<comment type="catalytic activity">
    <reaction evidence="1">
        <text>a 1-acyl-sn-glycero-3-phosphoethanolamine = a 1-acyl-sn-glycero-2,3-cyclic phosphate + ethanolamine</text>
        <dbReference type="Rhea" id="RHEA:60704"/>
        <dbReference type="ChEBI" id="CHEBI:57603"/>
        <dbReference type="ChEBI" id="CHEBI:64381"/>
        <dbReference type="ChEBI" id="CHEBI:143947"/>
    </reaction>
</comment>
<comment type="cofactor">
    <cofactor evidence="5">
        <name>Mg(2+)</name>
        <dbReference type="ChEBI" id="CHEBI:18420"/>
    </cofactor>
    <text evidence="5">Binds 1 Mg(2+) ion per subunit.</text>
</comment>
<comment type="subcellular location">
    <subcellularLocation>
        <location evidence="9">Secreted</location>
    </subcellularLocation>
</comment>
<comment type="tissue specificity">
    <text evidence="9">Expressed by the venom gland.</text>
</comment>
<comment type="similarity">
    <text evidence="8">Belongs to the arthropod phospholipase D family. Class II subfamily.</text>
</comment>
<comment type="caution">
    <text evidence="1 2 4">The most common activity assay for dermonecrotic toxins detects enzymatic activity by monitoring choline release from substrate. Liberation of choline from sphingomyelin (SM) or lysophosphatidylcholine (LPC) is commonly assumed to result from substrate hydrolysis, giving either ceramide-1-phosphate (C1P) or lysophosphatidic acid (LPA), respectively, as a second product. However, two studies from Lajoie and colleagues (2013 and 2015) report the observation of exclusive formation of cyclic phosphate products as second products, resulting from intramolecular transphosphatidylation. Cyclic phosphates have vastly different biological properties from their monoester counterparts, and they may be relevant to the pathology of brown spider envenomation.</text>
</comment>
<evidence type="ECO:0000250" key="1">
    <source>
        <dbReference type="UniProtKB" id="A0A0D4WTV1"/>
    </source>
</evidence>
<evidence type="ECO:0000250" key="2">
    <source>
        <dbReference type="UniProtKB" id="A0A0D4WV12"/>
    </source>
</evidence>
<evidence type="ECO:0000250" key="3">
    <source>
        <dbReference type="UniProtKB" id="P0CE80"/>
    </source>
</evidence>
<evidence type="ECO:0000250" key="4">
    <source>
        <dbReference type="UniProtKB" id="Q4ZFU2"/>
    </source>
</evidence>
<evidence type="ECO:0000250" key="5">
    <source>
        <dbReference type="UniProtKB" id="Q8I914"/>
    </source>
</evidence>
<evidence type="ECO:0000255" key="6"/>
<evidence type="ECO:0000303" key="7">
    <source>
    </source>
</evidence>
<evidence type="ECO:0000305" key="8"/>
<evidence type="ECO:0000305" key="9">
    <source>
    </source>
</evidence>
<organism>
    <name type="scientific">Loxosceles deserta</name>
    <name type="common">Desert recluse spider</name>
    <dbReference type="NCBI Taxonomy" id="424440"/>
    <lineage>
        <taxon>Eukaryota</taxon>
        <taxon>Metazoa</taxon>
        <taxon>Ecdysozoa</taxon>
        <taxon>Arthropoda</taxon>
        <taxon>Chelicerata</taxon>
        <taxon>Arachnida</taxon>
        <taxon>Araneae</taxon>
        <taxon>Araneomorphae</taxon>
        <taxon>Haplogynae</taxon>
        <taxon>Scytodoidea</taxon>
        <taxon>Sicariidae</taxon>
        <taxon>Loxosceles</taxon>
    </lineage>
</organism>
<protein>
    <recommendedName>
        <fullName evidence="7">Dermonecrotic toxin LdSicTox-alphaIB1aii</fullName>
        <ecNumber evidence="4">4.6.1.-</ecNumber>
    </recommendedName>
    <alternativeName>
        <fullName>Phospholipase D</fullName>
        <shortName>PLD</shortName>
    </alternativeName>
    <alternativeName>
        <fullName>Sphingomyelin phosphodiesterase D</fullName>
        <shortName>SMD</shortName>
        <shortName>SMase D</shortName>
        <shortName>Sphingomyelinase D</shortName>
    </alternativeName>
</protein>